<keyword id="KW-0150">Chloroplast</keyword>
<keyword id="KW-0507">mRNA processing</keyword>
<keyword id="KW-0934">Plastid</keyword>
<keyword id="KW-0694">RNA-binding</keyword>
<keyword id="KW-0819">tRNA processing</keyword>
<gene>
    <name evidence="1" type="primary">matK</name>
</gene>
<geneLocation type="chloroplast"/>
<reference key="1">
    <citation type="journal article" date="1997" name="Am. J. Bot.">
        <title>Chloroplast DNA phylogeny, reticulate evolution, and biogeography of Paeonia (Paeoniaceae).</title>
        <authorList>
            <person name="Sang T."/>
            <person name="Crawford D.J."/>
            <person name="Stuessy T.F."/>
        </authorList>
    </citation>
    <scope>NUCLEOTIDE SEQUENCE [GENOMIC DNA]</scope>
</reference>
<dbReference type="EMBL" id="AF033607">
    <property type="protein sequence ID" value="AAB92539.1"/>
    <property type="molecule type" value="Genomic_DNA"/>
</dbReference>
<dbReference type="GO" id="GO:0009507">
    <property type="term" value="C:chloroplast"/>
    <property type="evidence" value="ECO:0007669"/>
    <property type="project" value="UniProtKB-SubCell"/>
</dbReference>
<dbReference type="GO" id="GO:0003723">
    <property type="term" value="F:RNA binding"/>
    <property type="evidence" value="ECO:0007669"/>
    <property type="project" value="UniProtKB-KW"/>
</dbReference>
<dbReference type="GO" id="GO:0006397">
    <property type="term" value="P:mRNA processing"/>
    <property type="evidence" value="ECO:0007669"/>
    <property type="project" value="UniProtKB-KW"/>
</dbReference>
<dbReference type="GO" id="GO:0008380">
    <property type="term" value="P:RNA splicing"/>
    <property type="evidence" value="ECO:0007669"/>
    <property type="project" value="UniProtKB-UniRule"/>
</dbReference>
<dbReference type="GO" id="GO:0008033">
    <property type="term" value="P:tRNA processing"/>
    <property type="evidence" value="ECO:0007669"/>
    <property type="project" value="UniProtKB-KW"/>
</dbReference>
<dbReference type="HAMAP" id="MF_01390">
    <property type="entry name" value="MatK"/>
    <property type="match status" value="1"/>
</dbReference>
<dbReference type="InterPro" id="IPR024937">
    <property type="entry name" value="Domain_X"/>
</dbReference>
<dbReference type="InterPro" id="IPR002866">
    <property type="entry name" value="Maturase_MatK"/>
</dbReference>
<dbReference type="InterPro" id="IPR024942">
    <property type="entry name" value="Maturase_MatK_N"/>
</dbReference>
<dbReference type="PANTHER" id="PTHR34811">
    <property type="entry name" value="MATURASE K"/>
    <property type="match status" value="1"/>
</dbReference>
<dbReference type="PANTHER" id="PTHR34811:SF1">
    <property type="entry name" value="MATURASE K"/>
    <property type="match status" value="1"/>
</dbReference>
<dbReference type="Pfam" id="PF01348">
    <property type="entry name" value="Intron_maturas2"/>
    <property type="match status" value="1"/>
</dbReference>
<dbReference type="Pfam" id="PF01824">
    <property type="entry name" value="MatK_N"/>
    <property type="match status" value="1"/>
</dbReference>
<sequence>MEKSQGYLELDKSWRHNFLYPLIFQEYIYALAHEQGLNRSILLENTDHDNKYSSLIVKRLITLIHQQNHFLIFDNDSNQNPFWKHNNNLYSQTISEGFVIIVEIPFSPRFVDSLEEKKKILKSNNLRSIHSIFPFLEDQILHLNFVANILIPYPIHLEIVVQSLRYRVKDASSLHLLRFFLFTLNKSISSFSKRNQRFFLFLYNSHVYEYESTFLFLRNKTSHLRSTSSGAFLERIFFYGKIKHLIEVFANDFQAILWLFKDPFMHYVRYQGKSILASKRTSLRMNKWKYYLVNFWQCQFYVWSQPGRVSINQLSNHSLDFLGYLSSVRRNPLAVRSQMLENSFLTDNAIKKFDIIVLLISLIGSLAKAKFCNVLGHPLSKPARADSSDSDIIERFVRICRNLSHYHSGSSKKKSLYRIKYILRLSCARTLARKHKTTVRSFLKRLGSELLEEFLTEDGQVISLIFPRTSSTSWRLYRGGIWYLDITCINDLANHE</sequence>
<accession>P68754</accession>
<accession>O48302</accession>
<comment type="function">
    <text evidence="1">Usually encoded in the trnK tRNA gene intron. Probably assists in splicing its own and other chloroplast group II introns.</text>
</comment>
<comment type="subcellular location">
    <subcellularLocation>
        <location>Plastid</location>
        <location>Chloroplast</location>
    </subcellularLocation>
</comment>
<comment type="similarity">
    <text evidence="1">Belongs to the intron maturase 2 family. MatK subfamily.</text>
</comment>
<organism>
    <name type="scientific">Paeonia mascula subsp. russoi</name>
    <name type="common">Peony</name>
    <name type="synonym">Paeonia russoi</name>
    <dbReference type="NCBI Taxonomy" id="40719"/>
    <lineage>
        <taxon>Eukaryota</taxon>
        <taxon>Viridiplantae</taxon>
        <taxon>Streptophyta</taxon>
        <taxon>Embryophyta</taxon>
        <taxon>Tracheophyta</taxon>
        <taxon>Spermatophyta</taxon>
        <taxon>Magnoliopsida</taxon>
        <taxon>eudicotyledons</taxon>
        <taxon>Gunneridae</taxon>
        <taxon>Pentapetalae</taxon>
        <taxon>Saxifragales</taxon>
        <taxon>Paeoniaceae</taxon>
        <taxon>Paeonia</taxon>
    </lineage>
</organism>
<feature type="chain" id="PRO_0000143570" description="Maturase K">
    <location>
        <begin position="1"/>
        <end position="496"/>
    </location>
</feature>
<name>MATK_PAEMR</name>
<proteinExistence type="inferred from homology"/>
<protein>
    <recommendedName>
        <fullName evidence="1">Maturase K</fullName>
    </recommendedName>
    <alternativeName>
        <fullName evidence="1">Intron maturase</fullName>
    </alternativeName>
</protein>
<evidence type="ECO:0000255" key="1">
    <source>
        <dbReference type="HAMAP-Rule" id="MF_01390"/>
    </source>
</evidence>